<protein>
    <recommendedName>
        <fullName evidence="1">Acetate kinase</fullName>
        <ecNumber evidence="1">2.7.2.1</ecNumber>
    </recommendedName>
    <alternativeName>
        <fullName evidence="1">Acetokinase</fullName>
    </alternativeName>
</protein>
<evidence type="ECO:0000255" key="1">
    <source>
        <dbReference type="HAMAP-Rule" id="MF_00020"/>
    </source>
</evidence>
<comment type="function">
    <text evidence="1">Catalyzes the formation of acetyl phosphate from acetate and ATP. Can also catalyze the reverse reaction.</text>
</comment>
<comment type="catalytic activity">
    <reaction evidence="1">
        <text>acetate + ATP = acetyl phosphate + ADP</text>
        <dbReference type="Rhea" id="RHEA:11352"/>
        <dbReference type="ChEBI" id="CHEBI:22191"/>
        <dbReference type="ChEBI" id="CHEBI:30089"/>
        <dbReference type="ChEBI" id="CHEBI:30616"/>
        <dbReference type="ChEBI" id="CHEBI:456216"/>
        <dbReference type="EC" id="2.7.2.1"/>
    </reaction>
</comment>
<comment type="cofactor">
    <cofactor evidence="1">
        <name>Mg(2+)</name>
        <dbReference type="ChEBI" id="CHEBI:18420"/>
    </cofactor>
    <cofactor evidence="1">
        <name>Mn(2+)</name>
        <dbReference type="ChEBI" id="CHEBI:29035"/>
    </cofactor>
    <text evidence="1">Mg(2+). Can also accept Mn(2+).</text>
</comment>
<comment type="pathway">
    <text evidence="1">Metabolic intermediate biosynthesis; acetyl-CoA biosynthesis; acetyl-CoA from acetate: step 1/2.</text>
</comment>
<comment type="subunit">
    <text evidence="1">Homodimer.</text>
</comment>
<comment type="subcellular location">
    <subcellularLocation>
        <location evidence="1">Cytoplasm</location>
    </subcellularLocation>
</comment>
<comment type="similarity">
    <text evidence="1">Belongs to the acetokinase family.</text>
</comment>
<feature type="chain" id="PRO_1000002265" description="Acetate kinase">
    <location>
        <begin position="1"/>
        <end position="400"/>
    </location>
</feature>
<feature type="active site" description="Proton donor/acceptor" evidence="1">
    <location>
        <position position="147"/>
    </location>
</feature>
<feature type="binding site" evidence="1">
    <location>
        <position position="9"/>
    </location>
    <ligand>
        <name>Mg(2+)</name>
        <dbReference type="ChEBI" id="CHEBI:18420"/>
    </ligand>
</feature>
<feature type="binding site" evidence="1">
    <location>
        <position position="16"/>
    </location>
    <ligand>
        <name>ATP</name>
        <dbReference type="ChEBI" id="CHEBI:30616"/>
    </ligand>
</feature>
<feature type="binding site" evidence="1">
    <location>
        <position position="90"/>
    </location>
    <ligand>
        <name>substrate</name>
    </ligand>
</feature>
<feature type="binding site" evidence="1">
    <location>
        <begin position="207"/>
        <end position="211"/>
    </location>
    <ligand>
        <name>ATP</name>
        <dbReference type="ChEBI" id="CHEBI:30616"/>
    </ligand>
</feature>
<feature type="binding site" evidence="1">
    <location>
        <begin position="282"/>
        <end position="284"/>
    </location>
    <ligand>
        <name>ATP</name>
        <dbReference type="ChEBI" id="CHEBI:30616"/>
    </ligand>
</feature>
<feature type="binding site" evidence="1">
    <location>
        <begin position="330"/>
        <end position="334"/>
    </location>
    <ligand>
        <name>ATP</name>
        <dbReference type="ChEBI" id="CHEBI:30616"/>
    </ligand>
</feature>
<feature type="binding site" evidence="1">
    <location>
        <position position="385"/>
    </location>
    <ligand>
        <name>Mg(2+)</name>
        <dbReference type="ChEBI" id="CHEBI:18420"/>
    </ligand>
</feature>
<feature type="site" description="Transition state stabilizer" evidence="1">
    <location>
        <position position="179"/>
    </location>
</feature>
<feature type="site" description="Transition state stabilizer" evidence="1">
    <location>
        <position position="240"/>
    </location>
</feature>
<accession>Q2YTC9</accession>
<organism>
    <name type="scientific">Staphylococcus aureus (strain bovine RF122 / ET3-1)</name>
    <dbReference type="NCBI Taxonomy" id="273036"/>
    <lineage>
        <taxon>Bacteria</taxon>
        <taxon>Bacillati</taxon>
        <taxon>Bacillota</taxon>
        <taxon>Bacilli</taxon>
        <taxon>Bacillales</taxon>
        <taxon>Staphylococcaceae</taxon>
        <taxon>Staphylococcus</taxon>
    </lineage>
</organism>
<gene>
    <name evidence="1" type="primary">ackA</name>
    <name type="ordered locus">SAB1570c</name>
</gene>
<name>ACKA_STAAB</name>
<dbReference type="EC" id="2.7.2.1" evidence="1"/>
<dbReference type="EMBL" id="AJ938182">
    <property type="protein sequence ID" value="CAI81259.1"/>
    <property type="molecule type" value="Genomic_DNA"/>
</dbReference>
<dbReference type="RefSeq" id="WP_000040069.1">
    <property type="nucleotide sequence ID" value="NC_007622.1"/>
</dbReference>
<dbReference type="SMR" id="Q2YTC9"/>
<dbReference type="KEGG" id="sab:SAB1570c"/>
<dbReference type="HOGENOM" id="CLU_020352_0_1_9"/>
<dbReference type="UniPathway" id="UPA00340">
    <property type="reaction ID" value="UER00458"/>
</dbReference>
<dbReference type="GO" id="GO:0005737">
    <property type="term" value="C:cytoplasm"/>
    <property type="evidence" value="ECO:0007669"/>
    <property type="project" value="UniProtKB-SubCell"/>
</dbReference>
<dbReference type="GO" id="GO:0008776">
    <property type="term" value="F:acetate kinase activity"/>
    <property type="evidence" value="ECO:0007669"/>
    <property type="project" value="UniProtKB-UniRule"/>
</dbReference>
<dbReference type="GO" id="GO:0005524">
    <property type="term" value="F:ATP binding"/>
    <property type="evidence" value="ECO:0007669"/>
    <property type="project" value="UniProtKB-KW"/>
</dbReference>
<dbReference type="GO" id="GO:0000287">
    <property type="term" value="F:magnesium ion binding"/>
    <property type="evidence" value="ECO:0007669"/>
    <property type="project" value="UniProtKB-UniRule"/>
</dbReference>
<dbReference type="GO" id="GO:0006083">
    <property type="term" value="P:acetate metabolic process"/>
    <property type="evidence" value="ECO:0007669"/>
    <property type="project" value="TreeGrafter"/>
</dbReference>
<dbReference type="GO" id="GO:0006085">
    <property type="term" value="P:acetyl-CoA biosynthetic process"/>
    <property type="evidence" value="ECO:0007669"/>
    <property type="project" value="UniProtKB-UniRule"/>
</dbReference>
<dbReference type="CDD" id="cd24010">
    <property type="entry name" value="ASKHA_NBD_AcK_PK"/>
    <property type="match status" value="1"/>
</dbReference>
<dbReference type="Gene3D" id="3.30.420.40">
    <property type="match status" value="2"/>
</dbReference>
<dbReference type="HAMAP" id="MF_00020">
    <property type="entry name" value="Acetate_kinase"/>
    <property type="match status" value="1"/>
</dbReference>
<dbReference type="InterPro" id="IPR004372">
    <property type="entry name" value="Ac/propionate_kinase"/>
</dbReference>
<dbReference type="InterPro" id="IPR000890">
    <property type="entry name" value="Aliphatic_acid_kin_short-chain"/>
</dbReference>
<dbReference type="InterPro" id="IPR023865">
    <property type="entry name" value="Aliphatic_acid_kinase_CS"/>
</dbReference>
<dbReference type="InterPro" id="IPR043129">
    <property type="entry name" value="ATPase_NBD"/>
</dbReference>
<dbReference type="NCBIfam" id="TIGR00016">
    <property type="entry name" value="ackA"/>
    <property type="match status" value="1"/>
</dbReference>
<dbReference type="PANTHER" id="PTHR21060">
    <property type="entry name" value="ACETATE KINASE"/>
    <property type="match status" value="1"/>
</dbReference>
<dbReference type="PANTHER" id="PTHR21060:SF15">
    <property type="entry name" value="ACETATE KINASE-RELATED"/>
    <property type="match status" value="1"/>
</dbReference>
<dbReference type="Pfam" id="PF00871">
    <property type="entry name" value="Acetate_kinase"/>
    <property type="match status" value="1"/>
</dbReference>
<dbReference type="PIRSF" id="PIRSF000722">
    <property type="entry name" value="Acetate_prop_kin"/>
    <property type="match status" value="1"/>
</dbReference>
<dbReference type="PRINTS" id="PR00471">
    <property type="entry name" value="ACETATEKNASE"/>
</dbReference>
<dbReference type="SUPFAM" id="SSF53067">
    <property type="entry name" value="Actin-like ATPase domain"/>
    <property type="match status" value="2"/>
</dbReference>
<dbReference type="PROSITE" id="PS01075">
    <property type="entry name" value="ACETATE_KINASE_1"/>
    <property type="match status" value="1"/>
</dbReference>
<dbReference type="PROSITE" id="PS01076">
    <property type="entry name" value="ACETATE_KINASE_2"/>
    <property type="match status" value="1"/>
</dbReference>
<sequence length="400" mass="44043">MSKLILAINAGSSSLKFQLIRMPEEELVTKGLVERIGLKDSIFTIEVNGEKVKTVQDIKDHVEAVDIMLDAFKAHNIINDINDIDGTGHRVVHGGEKFPESVAITDEVEKEIEELSELAPLHNPANLMGIRAFRKLLPNIPHVAIFDTAFHQTMPEKAYLYSLPYHYYKDYGIRKYGFHGTSHKFVSQRAAEMLDKPIEDLRIISCHIGNGASIAAIDGGKSIDTSMGFTPLAGVTMGTRSGNIDPALIPFIMEKTGKTAEQVLEILNKESGLLGLSGTSSDLRDLSEEAESGKARSQMALDVFASKIHKYIGSYAARMHGVDVIVFTAGIGENSVEIRAKVLEGLEFMGVYWDPKKNENLLRGKEGFINYPHSPVKVVVIPTDEESMIARDVMTFGGLK</sequence>
<reference key="1">
    <citation type="journal article" date="2007" name="PLoS ONE">
        <title>Molecular correlates of host specialization in Staphylococcus aureus.</title>
        <authorList>
            <person name="Herron-Olson L."/>
            <person name="Fitzgerald J.R."/>
            <person name="Musser J.M."/>
            <person name="Kapur V."/>
        </authorList>
    </citation>
    <scope>NUCLEOTIDE SEQUENCE [LARGE SCALE GENOMIC DNA]</scope>
    <source>
        <strain>bovine RF122 / ET3-1</strain>
    </source>
</reference>
<keyword id="KW-0067">ATP-binding</keyword>
<keyword id="KW-0963">Cytoplasm</keyword>
<keyword id="KW-0418">Kinase</keyword>
<keyword id="KW-0460">Magnesium</keyword>
<keyword id="KW-0479">Metal-binding</keyword>
<keyword id="KW-0547">Nucleotide-binding</keyword>
<keyword id="KW-0808">Transferase</keyword>
<proteinExistence type="inferred from homology"/>